<dbReference type="EC" id="3.6.1.66" evidence="1"/>
<dbReference type="EMBL" id="AACD01000163">
    <property type="protein sequence ID" value="EAA60149.1"/>
    <property type="status" value="ALT_SEQ"/>
    <property type="molecule type" value="Genomic_DNA"/>
</dbReference>
<dbReference type="EMBL" id="BN001303">
    <property type="protein sequence ID" value="CBF77855.1"/>
    <property type="molecule type" value="Genomic_DNA"/>
</dbReference>
<dbReference type="RefSeq" id="XP_682130.1">
    <property type="nucleotide sequence ID" value="XM_677038.1"/>
</dbReference>
<dbReference type="SMR" id="C8V9B7"/>
<dbReference type="FunCoup" id="C8V9B7">
    <property type="interactions" value="723"/>
</dbReference>
<dbReference type="STRING" id="227321.C8V9B7"/>
<dbReference type="EnsemblFungi" id="CBF77855">
    <property type="protein sequence ID" value="CBF77855"/>
    <property type="gene ID" value="ANIA_08861"/>
</dbReference>
<dbReference type="KEGG" id="ani:ANIA_08861"/>
<dbReference type="VEuPathDB" id="FungiDB:AN8861"/>
<dbReference type="eggNOG" id="KOG3222">
    <property type="taxonomic scope" value="Eukaryota"/>
</dbReference>
<dbReference type="HOGENOM" id="CLU_082080_1_2_1"/>
<dbReference type="InParanoid" id="C8V9B7"/>
<dbReference type="OMA" id="YDPIFQP"/>
<dbReference type="OrthoDB" id="6288734at2759"/>
<dbReference type="Proteomes" id="UP000000560">
    <property type="component" value="Chromosome III"/>
</dbReference>
<dbReference type="GO" id="GO:0005737">
    <property type="term" value="C:cytoplasm"/>
    <property type="evidence" value="ECO:0000318"/>
    <property type="project" value="GO_Central"/>
</dbReference>
<dbReference type="GO" id="GO:0005634">
    <property type="term" value="C:nucleus"/>
    <property type="evidence" value="ECO:0007669"/>
    <property type="project" value="UniProtKB-SubCell"/>
</dbReference>
<dbReference type="GO" id="GO:0035870">
    <property type="term" value="F:dITP diphosphatase activity"/>
    <property type="evidence" value="ECO:0007669"/>
    <property type="project" value="RHEA"/>
</dbReference>
<dbReference type="GO" id="GO:0036220">
    <property type="term" value="F:ITP diphosphatase activity"/>
    <property type="evidence" value="ECO:0007669"/>
    <property type="project" value="RHEA"/>
</dbReference>
<dbReference type="GO" id="GO:0046872">
    <property type="term" value="F:metal ion binding"/>
    <property type="evidence" value="ECO:0007669"/>
    <property type="project" value="UniProtKB-KW"/>
</dbReference>
<dbReference type="GO" id="GO:0047429">
    <property type="term" value="F:nucleoside triphosphate diphosphatase activity"/>
    <property type="evidence" value="ECO:0000318"/>
    <property type="project" value="GO_Central"/>
</dbReference>
<dbReference type="GO" id="GO:0000166">
    <property type="term" value="F:nucleotide binding"/>
    <property type="evidence" value="ECO:0007669"/>
    <property type="project" value="UniProtKB-KW"/>
</dbReference>
<dbReference type="GO" id="GO:0036222">
    <property type="term" value="F:XTP diphosphatase activity"/>
    <property type="evidence" value="ECO:0007669"/>
    <property type="project" value="RHEA"/>
</dbReference>
<dbReference type="GO" id="GO:0009204">
    <property type="term" value="P:deoxyribonucleoside triphosphate catabolic process"/>
    <property type="evidence" value="ECO:0007669"/>
    <property type="project" value="UniProtKB-UniRule"/>
</dbReference>
<dbReference type="GO" id="GO:0009143">
    <property type="term" value="P:nucleoside triphosphate catabolic process"/>
    <property type="evidence" value="ECO:0000318"/>
    <property type="project" value="GO_Central"/>
</dbReference>
<dbReference type="GO" id="GO:0009117">
    <property type="term" value="P:nucleotide metabolic process"/>
    <property type="evidence" value="ECO:0007669"/>
    <property type="project" value="UniProtKB-KW"/>
</dbReference>
<dbReference type="CDD" id="cd00515">
    <property type="entry name" value="HAM1"/>
    <property type="match status" value="1"/>
</dbReference>
<dbReference type="FunFam" id="3.90.950.10:FF:000003">
    <property type="entry name" value="Inosine triphosphate pyrophosphatase"/>
    <property type="match status" value="1"/>
</dbReference>
<dbReference type="Gene3D" id="3.90.950.10">
    <property type="match status" value="1"/>
</dbReference>
<dbReference type="HAMAP" id="MF_03148">
    <property type="entry name" value="HAM1_NTPase"/>
    <property type="match status" value="1"/>
</dbReference>
<dbReference type="InterPro" id="IPR027502">
    <property type="entry name" value="ITPase"/>
</dbReference>
<dbReference type="InterPro" id="IPR029001">
    <property type="entry name" value="ITPase-like_fam"/>
</dbReference>
<dbReference type="InterPro" id="IPR002637">
    <property type="entry name" value="RdgB/HAM1"/>
</dbReference>
<dbReference type="NCBIfam" id="TIGR00042">
    <property type="entry name" value="RdgB/HAM1 family non-canonical purine NTP pyrophosphatase"/>
    <property type="match status" value="1"/>
</dbReference>
<dbReference type="PANTHER" id="PTHR11067:SF9">
    <property type="entry name" value="INOSINE TRIPHOSPHATE PYROPHOSPHATASE"/>
    <property type="match status" value="1"/>
</dbReference>
<dbReference type="PANTHER" id="PTHR11067">
    <property type="entry name" value="INOSINE TRIPHOSPHATE PYROPHOSPHATASE/HAM1 PROTEIN"/>
    <property type="match status" value="1"/>
</dbReference>
<dbReference type="Pfam" id="PF01725">
    <property type="entry name" value="Ham1p_like"/>
    <property type="match status" value="1"/>
</dbReference>
<dbReference type="SUPFAM" id="SSF52972">
    <property type="entry name" value="ITPase-like"/>
    <property type="match status" value="1"/>
</dbReference>
<reference key="1">
    <citation type="journal article" date="2005" name="Nature">
        <title>Sequencing of Aspergillus nidulans and comparative analysis with A. fumigatus and A. oryzae.</title>
        <authorList>
            <person name="Galagan J.E."/>
            <person name="Calvo S.E."/>
            <person name="Cuomo C."/>
            <person name="Ma L.-J."/>
            <person name="Wortman J.R."/>
            <person name="Batzoglou S."/>
            <person name="Lee S.-I."/>
            <person name="Bastuerkmen M."/>
            <person name="Spevak C.C."/>
            <person name="Clutterbuck J."/>
            <person name="Kapitonov V."/>
            <person name="Jurka J."/>
            <person name="Scazzocchio C."/>
            <person name="Farman M.L."/>
            <person name="Butler J."/>
            <person name="Purcell S."/>
            <person name="Harris S."/>
            <person name="Braus G.H."/>
            <person name="Draht O."/>
            <person name="Busch S."/>
            <person name="D'Enfert C."/>
            <person name="Bouchier C."/>
            <person name="Goldman G.H."/>
            <person name="Bell-Pedersen D."/>
            <person name="Griffiths-Jones S."/>
            <person name="Doonan J.H."/>
            <person name="Yu J."/>
            <person name="Vienken K."/>
            <person name="Pain A."/>
            <person name="Freitag M."/>
            <person name="Selker E.U."/>
            <person name="Archer D.B."/>
            <person name="Penalva M.A."/>
            <person name="Oakley B.R."/>
            <person name="Momany M."/>
            <person name="Tanaka T."/>
            <person name="Kumagai T."/>
            <person name="Asai K."/>
            <person name="Machida M."/>
            <person name="Nierman W.C."/>
            <person name="Denning D.W."/>
            <person name="Caddick M.X."/>
            <person name="Hynes M."/>
            <person name="Paoletti M."/>
            <person name="Fischer R."/>
            <person name="Miller B.L."/>
            <person name="Dyer P.S."/>
            <person name="Sachs M.S."/>
            <person name="Osmani S.A."/>
            <person name="Birren B.W."/>
        </authorList>
    </citation>
    <scope>NUCLEOTIDE SEQUENCE [LARGE SCALE GENOMIC DNA]</scope>
    <source>
        <strain>FGSC A4 / ATCC 38163 / CBS 112.46 / NRRL 194 / M139</strain>
    </source>
</reference>
<reference key="2">
    <citation type="journal article" date="2009" name="Fungal Genet. Biol.">
        <title>The 2008 update of the Aspergillus nidulans genome annotation: a community effort.</title>
        <authorList>
            <person name="Wortman J.R."/>
            <person name="Gilsenan J.M."/>
            <person name="Joardar V."/>
            <person name="Deegan J."/>
            <person name="Clutterbuck J."/>
            <person name="Andersen M.R."/>
            <person name="Archer D."/>
            <person name="Bencina M."/>
            <person name="Braus G."/>
            <person name="Coutinho P."/>
            <person name="von Dohren H."/>
            <person name="Doonan J."/>
            <person name="Driessen A.J."/>
            <person name="Durek P."/>
            <person name="Espeso E."/>
            <person name="Fekete E."/>
            <person name="Flipphi M."/>
            <person name="Estrada C.G."/>
            <person name="Geysens S."/>
            <person name="Goldman G."/>
            <person name="de Groot P.W."/>
            <person name="Hansen K."/>
            <person name="Harris S.D."/>
            <person name="Heinekamp T."/>
            <person name="Helmstaedt K."/>
            <person name="Henrissat B."/>
            <person name="Hofmann G."/>
            <person name="Homan T."/>
            <person name="Horio T."/>
            <person name="Horiuchi H."/>
            <person name="James S."/>
            <person name="Jones M."/>
            <person name="Karaffa L."/>
            <person name="Karanyi Z."/>
            <person name="Kato M."/>
            <person name="Keller N."/>
            <person name="Kelly D.E."/>
            <person name="Kiel J.A."/>
            <person name="Kim J.M."/>
            <person name="van der Klei I.J."/>
            <person name="Klis F.M."/>
            <person name="Kovalchuk A."/>
            <person name="Krasevec N."/>
            <person name="Kubicek C.P."/>
            <person name="Liu B."/>
            <person name="Maccabe A."/>
            <person name="Meyer V."/>
            <person name="Mirabito P."/>
            <person name="Miskei M."/>
            <person name="Mos M."/>
            <person name="Mullins J."/>
            <person name="Nelson D.R."/>
            <person name="Nielsen J."/>
            <person name="Oakley B.R."/>
            <person name="Osmani S.A."/>
            <person name="Pakula T."/>
            <person name="Paszewski A."/>
            <person name="Paulsen I."/>
            <person name="Pilsyk S."/>
            <person name="Pocsi I."/>
            <person name="Punt P.J."/>
            <person name="Ram A.F."/>
            <person name="Ren Q."/>
            <person name="Robellet X."/>
            <person name="Robson G."/>
            <person name="Seiboth B."/>
            <person name="van Solingen P."/>
            <person name="Specht T."/>
            <person name="Sun J."/>
            <person name="Taheri-Talesh N."/>
            <person name="Takeshita N."/>
            <person name="Ussery D."/>
            <person name="vanKuyk P.A."/>
            <person name="Visser H."/>
            <person name="van de Vondervoort P.J."/>
            <person name="de Vries R.P."/>
            <person name="Walton J."/>
            <person name="Xiang X."/>
            <person name="Xiong Y."/>
            <person name="Zeng A.P."/>
            <person name="Brandt B.W."/>
            <person name="Cornell M.J."/>
            <person name="van den Hondel C.A."/>
            <person name="Visser J."/>
            <person name="Oliver S.G."/>
            <person name="Turner G."/>
        </authorList>
    </citation>
    <scope>GENOME REANNOTATION</scope>
    <source>
        <strain>FGSC A4 / ATCC 38163 / CBS 112.46 / NRRL 194 / M139</strain>
    </source>
</reference>
<sequence length="183" mass="20091">MKTINFITGNKNKLAEVRAIIGNVVDVQNQTVDVPEIQGTIEEIAKEKCRHAANAVGGPVLTEDTALGFHALKGLPGPYIKFFLEALGHEGLNKMLDGFESRGAEAVCTFAFSPGPGSEPILFQGRTEGVIVSPRGPANFGWDPIFEYEGQTYAEMTKEEKNKISHRYKALVKLQQWLVDELS</sequence>
<evidence type="ECO:0000255" key="1">
    <source>
        <dbReference type="HAMAP-Rule" id="MF_03148"/>
    </source>
</evidence>
<evidence type="ECO:0000305" key="2"/>
<proteinExistence type="inferred from homology"/>
<organism>
    <name type="scientific">Emericella nidulans (strain FGSC A4 / ATCC 38163 / CBS 112.46 / NRRL 194 / M139)</name>
    <name type="common">Aspergillus nidulans</name>
    <dbReference type="NCBI Taxonomy" id="227321"/>
    <lineage>
        <taxon>Eukaryota</taxon>
        <taxon>Fungi</taxon>
        <taxon>Dikarya</taxon>
        <taxon>Ascomycota</taxon>
        <taxon>Pezizomycotina</taxon>
        <taxon>Eurotiomycetes</taxon>
        <taxon>Eurotiomycetidae</taxon>
        <taxon>Eurotiales</taxon>
        <taxon>Aspergillaceae</taxon>
        <taxon>Aspergillus</taxon>
        <taxon>Aspergillus subgen. Nidulantes</taxon>
    </lineage>
</organism>
<feature type="chain" id="PRO_0000413138" description="Inosine triphosphate pyrophosphatase">
    <location>
        <begin position="1"/>
        <end position="183"/>
    </location>
</feature>
<feature type="binding site" evidence="1">
    <location>
        <begin position="8"/>
        <end position="13"/>
    </location>
    <ligand>
        <name>ITP</name>
        <dbReference type="ChEBI" id="CHEBI:61402"/>
    </ligand>
</feature>
<feature type="binding site" evidence="1">
    <location>
        <position position="36"/>
    </location>
    <ligand>
        <name>Mg(2+)</name>
        <dbReference type="ChEBI" id="CHEBI:18420"/>
    </ligand>
</feature>
<feature type="binding site" evidence="1">
    <location>
        <position position="48"/>
    </location>
    <ligand>
        <name>ITP</name>
        <dbReference type="ChEBI" id="CHEBI:61402"/>
    </ligand>
</feature>
<feature type="binding site" evidence="1">
    <location>
        <begin position="64"/>
        <end position="65"/>
    </location>
    <ligand>
        <name>ITP</name>
        <dbReference type="ChEBI" id="CHEBI:61402"/>
    </ligand>
</feature>
<feature type="binding site" evidence="1">
    <location>
        <position position="81"/>
    </location>
    <ligand>
        <name>ITP</name>
        <dbReference type="ChEBI" id="CHEBI:61402"/>
    </ligand>
</feature>
<feature type="binding site" evidence="1">
    <location>
        <begin position="140"/>
        <end position="143"/>
    </location>
    <ligand>
        <name>ITP</name>
        <dbReference type="ChEBI" id="CHEBI:61402"/>
    </ligand>
</feature>
<feature type="binding site" evidence="1">
    <location>
        <position position="161"/>
    </location>
    <ligand>
        <name>ITP</name>
        <dbReference type="ChEBI" id="CHEBI:61402"/>
    </ligand>
</feature>
<feature type="binding site" evidence="1">
    <location>
        <begin position="166"/>
        <end position="167"/>
    </location>
    <ligand>
        <name>ITP</name>
        <dbReference type="ChEBI" id="CHEBI:61402"/>
    </ligand>
</feature>
<comment type="function">
    <text evidence="1">Pyrophosphatase that hydrolyzes non-canonical purine nucleotides such as inosine triphosphate (ITP), deoxyinosine triphosphate (dITP) or xanthosine 5'-triphosphate (XTP) to their respective monophosphate derivatives. The enzyme does not distinguish between the deoxy- and ribose forms. Probably excludes non-canonical purines from RNA and DNA precursor pools, thus preventing their incorporation into RNA and DNA and avoiding chromosomal lesions.</text>
</comment>
<comment type="catalytic activity">
    <reaction evidence="1">
        <text>ITP + H2O = IMP + diphosphate + H(+)</text>
        <dbReference type="Rhea" id="RHEA:29399"/>
        <dbReference type="ChEBI" id="CHEBI:15377"/>
        <dbReference type="ChEBI" id="CHEBI:15378"/>
        <dbReference type="ChEBI" id="CHEBI:33019"/>
        <dbReference type="ChEBI" id="CHEBI:58053"/>
        <dbReference type="ChEBI" id="CHEBI:61402"/>
        <dbReference type="EC" id="3.6.1.66"/>
    </reaction>
    <physiologicalReaction direction="left-to-right" evidence="1">
        <dbReference type="Rhea" id="RHEA:29400"/>
    </physiologicalReaction>
</comment>
<comment type="catalytic activity">
    <reaction evidence="1">
        <text>dITP + H2O = dIMP + diphosphate + H(+)</text>
        <dbReference type="Rhea" id="RHEA:28342"/>
        <dbReference type="ChEBI" id="CHEBI:15377"/>
        <dbReference type="ChEBI" id="CHEBI:15378"/>
        <dbReference type="ChEBI" id="CHEBI:33019"/>
        <dbReference type="ChEBI" id="CHEBI:61194"/>
        <dbReference type="ChEBI" id="CHEBI:61382"/>
        <dbReference type="EC" id="3.6.1.66"/>
    </reaction>
    <physiologicalReaction direction="left-to-right" evidence="1">
        <dbReference type="Rhea" id="RHEA:28343"/>
    </physiologicalReaction>
</comment>
<comment type="catalytic activity">
    <reaction evidence="1">
        <text>XTP + H2O = XMP + diphosphate + H(+)</text>
        <dbReference type="Rhea" id="RHEA:28610"/>
        <dbReference type="ChEBI" id="CHEBI:15377"/>
        <dbReference type="ChEBI" id="CHEBI:15378"/>
        <dbReference type="ChEBI" id="CHEBI:33019"/>
        <dbReference type="ChEBI" id="CHEBI:57464"/>
        <dbReference type="ChEBI" id="CHEBI:61314"/>
        <dbReference type="EC" id="3.6.1.66"/>
    </reaction>
    <physiologicalReaction direction="left-to-right" evidence="1">
        <dbReference type="Rhea" id="RHEA:28611"/>
    </physiologicalReaction>
</comment>
<comment type="cofactor">
    <cofactor evidence="1">
        <name>Mg(2+)</name>
        <dbReference type="ChEBI" id="CHEBI:18420"/>
    </cofactor>
    <cofactor evidence="1">
        <name>Mn(2+)</name>
        <dbReference type="ChEBI" id="CHEBI:29035"/>
    </cofactor>
    <text evidence="1">Binds 1 divalent metal cation per subunit; can use either Mg(2+) or Mn(2+).</text>
</comment>
<comment type="subunit">
    <text evidence="1">Homodimer.</text>
</comment>
<comment type="subcellular location">
    <subcellularLocation>
        <location evidence="1">Cytoplasm</location>
    </subcellularLocation>
    <subcellularLocation>
        <location evidence="1">Nucleus</location>
    </subcellularLocation>
</comment>
<comment type="similarity">
    <text evidence="1">Belongs to the HAM1 NTPase family.</text>
</comment>
<comment type="sequence caution" evidence="2">
    <conflict type="erroneous gene model prediction">
        <sequence resource="EMBL-CDS" id="EAA60149"/>
    </conflict>
</comment>
<keyword id="KW-0963">Cytoplasm</keyword>
<keyword id="KW-0378">Hydrolase</keyword>
<keyword id="KW-0460">Magnesium</keyword>
<keyword id="KW-0464">Manganese</keyword>
<keyword id="KW-0479">Metal-binding</keyword>
<keyword id="KW-0546">Nucleotide metabolism</keyword>
<keyword id="KW-0547">Nucleotide-binding</keyword>
<keyword id="KW-0539">Nucleus</keyword>
<keyword id="KW-1185">Reference proteome</keyword>
<accession>C8V9B7</accession>
<accession>Q5AS69</accession>
<name>ITPA_EMENI</name>
<gene>
    <name type="ORF">AN8861</name>
</gene>
<protein>
    <recommendedName>
        <fullName evidence="1">Inosine triphosphate pyrophosphatase</fullName>
        <shortName evidence="1">ITPase</shortName>
        <shortName evidence="1">Inosine triphosphatase</shortName>
        <ecNumber evidence="1">3.6.1.66</ecNumber>
    </recommendedName>
    <alternativeName>
        <fullName evidence="1">Non-canonical purine NTP pyrophosphatase</fullName>
    </alternativeName>
    <alternativeName>
        <fullName evidence="1">Non-standard purine NTP pyrophosphatase</fullName>
    </alternativeName>
    <alternativeName>
        <fullName evidence="1">Nucleoside-triphosphate diphosphatase</fullName>
    </alternativeName>
    <alternativeName>
        <fullName evidence="1">Nucleoside-triphosphate pyrophosphatase</fullName>
        <shortName evidence="1">NTPase</shortName>
    </alternativeName>
    <alternativeName>
        <fullName evidence="1">XTP/dITP diphosphatase</fullName>
    </alternativeName>
</protein>